<organism>
    <name type="scientific">Mus musculus</name>
    <name type="common">Mouse</name>
    <dbReference type="NCBI Taxonomy" id="10090"/>
    <lineage>
        <taxon>Eukaryota</taxon>
        <taxon>Metazoa</taxon>
        <taxon>Chordata</taxon>
        <taxon>Craniata</taxon>
        <taxon>Vertebrata</taxon>
        <taxon>Euteleostomi</taxon>
        <taxon>Mammalia</taxon>
        <taxon>Eutheria</taxon>
        <taxon>Euarchontoglires</taxon>
        <taxon>Glires</taxon>
        <taxon>Rodentia</taxon>
        <taxon>Myomorpha</taxon>
        <taxon>Muroidea</taxon>
        <taxon>Muridae</taxon>
        <taxon>Murinae</taxon>
        <taxon>Mus</taxon>
        <taxon>Mus</taxon>
    </lineage>
</organism>
<gene>
    <name type="primary">Dr1</name>
</gene>
<dbReference type="EMBL" id="AK031057">
    <property type="protein sequence ID" value="BAE20474.1"/>
    <property type="molecule type" value="mRNA"/>
</dbReference>
<dbReference type="EMBL" id="AK075713">
    <property type="protein sequence ID" value="BAC35903.1"/>
    <property type="molecule type" value="mRNA"/>
</dbReference>
<dbReference type="EMBL" id="AK090113">
    <property type="protein sequence ID" value="BAC41099.1"/>
    <property type="molecule type" value="mRNA"/>
</dbReference>
<dbReference type="EMBL" id="AK139866">
    <property type="protein sequence ID" value="BAE24166.1"/>
    <property type="molecule type" value="mRNA"/>
</dbReference>
<dbReference type="EMBL" id="AK146573">
    <property type="protein sequence ID" value="BAE27269.1"/>
    <property type="molecule type" value="mRNA"/>
</dbReference>
<dbReference type="EMBL" id="BC013461">
    <property type="protein sequence ID" value="AAH13461.1"/>
    <property type="molecule type" value="mRNA"/>
</dbReference>
<dbReference type="CCDS" id="CCDS19509.1"/>
<dbReference type="RefSeq" id="NP_080382.2">
    <property type="nucleotide sequence ID" value="NM_026106.4"/>
</dbReference>
<dbReference type="SMR" id="Q91WV0"/>
<dbReference type="BioGRID" id="199303">
    <property type="interactions" value="6"/>
</dbReference>
<dbReference type="ComplexPortal" id="CPX-1025">
    <property type="entry name" value="GCN5-containing ATAC complex"/>
</dbReference>
<dbReference type="ComplexPortal" id="CPX-1029">
    <property type="entry name" value="PCAF-containing ATAC complex"/>
</dbReference>
<dbReference type="FunCoup" id="Q91WV0">
    <property type="interactions" value="3578"/>
</dbReference>
<dbReference type="IntAct" id="Q91WV0">
    <property type="interactions" value="2"/>
</dbReference>
<dbReference type="MINT" id="Q91WV0"/>
<dbReference type="STRING" id="10090.ENSMUSP00000031190"/>
<dbReference type="iPTMnet" id="Q91WV0"/>
<dbReference type="PhosphoSitePlus" id="Q91WV0"/>
<dbReference type="jPOST" id="Q91WV0"/>
<dbReference type="PaxDb" id="10090-ENSMUSP00000031190"/>
<dbReference type="ProteomicsDB" id="287352"/>
<dbReference type="Pumba" id="Q91WV0"/>
<dbReference type="Antibodypedia" id="19942">
    <property type="antibodies" value="202 antibodies from 31 providers"/>
</dbReference>
<dbReference type="DNASU" id="13486"/>
<dbReference type="Ensembl" id="ENSMUST00000031190.5">
    <property type="protein sequence ID" value="ENSMUSP00000031190.5"/>
    <property type="gene ID" value="ENSMUSG00000029265.5"/>
</dbReference>
<dbReference type="GeneID" id="13486"/>
<dbReference type="KEGG" id="mmu:13486"/>
<dbReference type="UCSC" id="uc008ynt.1">
    <property type="organism name" value="mouse"/>
</dbReference>
<dbReference type="AGR" id="MGI:1100515"/>
<dbReference type="CTD" id="1810"/>
<dbReference type="MGI" id="MGI:1100515">
    <property type="gene designation" value="Dr1"/>
</dbReference>
<dbReference type="VEuPathDB" id="HostDB:ENSMUSG00000029265"/>
<dbReference type="eggNOG" id="KOG0871">
    <property type="taxonomic scope" value="Eukaryota"/>
</dbReference>
<dbReference type="GeneTree" id="ENSGT00550000075010"/>
<dbReference type="HOGENOM" id="CLU_066247_11_1_1"/>
<dbReference type="InParanoid" id="Q91WV0"/>
<dbReference type="OMA" id="RDAKFKK"/>
<dbReference type="OrthoDB" id="601405at2759"/>
<dbReference type="PhylomeDB" id="Q91WV0"/>
<dbReference type="TreeFam" id="TF317588"/>
<dbReference type="Reactome" id="R-MMU-9772755">
    <property type="pathway name" value="Formation of WDR5-containing histone-modifying complexes"/>
</dbReference>
<dbReference type="BioGRID-ORCS" id="13486">
    <property type="hits" value="23 hits in 82 CRISPR screens"/>
</dbReference>
<dbReference type="PRO" id="PR:Q91WV0"/>
<dbReference type="Proteomes" id="UP000000589">
    <property type="component" value="Chromosome 5"/>
</dbReference>
<dbReference type="RNAct" id="Q91WV0">
    <property type="molecule type" value="protein"/>
</dbReference>
<dbReference type="Bgee" id="ENSMUSG00000029265">
    <property type="expression patterns" value="Expressed in spermatocyte and 277 other cell types or tissues"/>
</dbReference>
<dbReference type="GO" id="GO:0140672">
    <property type="term" value="C:ATAC complex"/>
    <property type="evidence" value="ECO:0000314"/>
    <property type="project" value="ComplexPortal"/>
</dbReference>
<dbReference type="GO" id="GO:0072686">
    <property type="term" value="C:mitotic spindle"/>
    <property type="evidence" value="ECO:0000303"/>
    <property type="project" value="ComplexPortal"/>
</dbReference>
<dbReference type="GO" id="GO:0017054">
    <property type="term" value="C:negative cofactor 2 complex"/>
    <property type="evidence" value="ECO:0007669"/>
    <property type="project" value="InterPro"/>
</dbReference>
<dbReference type="GO" id="GO:0005654">
    <property type="term" value="C:nucleoplasm"/>
    <property type="evidence" value="ECO:0007669"/>
    <property type="project" value="Ensembl"/>
</dbReference>
<dbReference type="GO" id="GO:0005634">
    <property type="term" value="C:nucleus"/>
    <property type="evidence" value="ECO:0000314"/>
    <property type="project" value="MGI"/>
</dbReference>
<dbReference type="GO" id="GO:0090575">
    <property type="term" value="C:RNA polymerase II transcription regulator complex"/>
    <property type="evidence" value="ECO:0007669"/>
    <property type="project" value="Ensembl"/>
</dbReference>
<dbReference type="GO" id="GO:0003677">
    <property type="term" value="F:DNA binding"/>
    <property type="evidence" value="ECO:0007669"/>
    <property type="project" value="UniProtKB-KW"/>
</dbReference>
<dbReference type="GO" id="GO:0046982">
    <property type="term" value="F:protein heterodimerization activity"/>
    <property type="evidence" value="ECO:0007669"/>
    <property type="project" value="InterPro"/>
</dbReference>
<dbReference type="GO" id="GO:0016251">
    <property type="term" value="F:RNA polymerase II general transcription initiation factor activity"/>
    <property type="evidence" value="ECO:0007669"/>
    <property type="project" value="Ensembl"/>
</dbReference>
<dbReference type="GO" id="GO:0017025">
    <property type="term" value="F:TBP-class protein binding"/>
    <property type="evidence" value="ECO:0007669"/>
    <property type="project" value="Ensembl"/>
</dbReference>
<dbReference type="GO" id="GO:0000122">
    <property type="term" value="P:negative regulation of transcription by RNA polymerase II"/>
    <property type="evidence" value="ECO:0007669"/>
    <property type="project" value="Ensembl"/>
</dbReference>
<dbReference type="GO" id="GO:0051726">
    <property type="term" value="P:regulation of cell cycle"/>
    <property type="evidence" value="ECO:0000315"/>
    <property type="project" value="ComplexPortal"/>
</dbReference>
<dbReference type="GO" id="GO:0051302">
    <property type="term" value="P:regulation of cell division"/>
    <property type="evidence" value="ECO:0000314"/>
    <property type="project" value="ComplexPortal"/>
</dbReference>
<dbReference type="GO" id="GO:0006355">
    <property type="term" value="P:regulation of DNA-templated transcription"/>
    <property type="evidence" value="ECO:0000266"/>
    <property type="project" value="ComplexPortal"/>
</dbReference>
<dbReference type="GO" id="GO:0045995">
    <property type="term" value="P:regulation of embryonic development"/>
    <property type="evidence" value="ECO:0000314"/>
    <property type="project" value="ComplexPortal"/>
</dbReference>
<dbReference type="GO" id="GO:0006357">
    <property type="term" value="P:regulation of transcription by RNA polymerase II"/>
    <property type="evidence" value="ECO:0000266"/>
    <property type="project" value="ComplexPortal"/>
</dbReference>
<dbReference type="CDD" id="cd22905">
    <property type="entry name" value="HFD_Dr1"/>
    <property type="match status" value="1"/>
</dbReference>
<dbReference type="FunFam" id="1.10.20.10:FF:000019">
    <property type="entry name" value="Negative cofactor 2 beta"/>
    <property type="match status" value="1"/>
</dbReference>
<dbReference type="Gene3D" id="1.10.20.10">
    <property type="entry name" value="Histone, subunit A"/>
    <property type="match status" value="1"/>
</dbReference>
<dbReference type="InterPro" id="IPR003958">
    <property type="entry name" value="CBFA_NFYB_domain"/>
</dbReference>
<dbReference type="InterPro" id="IPR009072">
    <property type="entry name" value="Histone-fold"/>
</dbReference>
<dbReference type="InterPro" id="IPR042225">
    <property type="entry name" value="Ncb2"/>
</dbReference>
<dbReference type="PANTHER" id="PTHR46138">
    <property type="entry name" value="PROTEIN DR1"/>
    <property type="match status" value="1"/>
</dbReference>
<dbReference type="PANTHER" id="PTHR46138:SF1">
    <property type="entry name" value="PROTEIN DR1"/>
    <property type="match status" value="1"/>
</dbReference>
<dbReference type="Pfam" id="PF00808">
    <property type="entry name" value="CBFD_NFYB_HMF"/>
    <property type="match status" value="1"/>
</dbReference>
<dbReference type="PRINTS" id="PR00615">
    <property type="entry name" value="CCAATSUBUNTA"/>
</dbReference>
<dbReference type="SUPFAM" id="SSF47113">
    <property type="entry name" value="Histone-fold"/>
    <property type="match status" value="1"/>
</dbReference>
<accession>Q91WV0</accession>
<accession>Q3UT14</accession>
<comment type="function">
    <text evidence="1">The association of the DR1/DRAP1 heterodimer with TBP results in a functional repression of both activated and basal transcription of class II genes. This interaction precludes the formation of a transcription-competent complex by inhibiting the association of TFIIA and/or TFIIB with TBP. Can bind to DNA on its own. Component of the ATAC complex, a complex with histone acetyltransferase activity on histones H3 and H4 (By similarity).</text>
</comment>
<comment type="subunit">
    <text evidence="1">Heterodimer with DRAP1. DR1 exists in solution as a homotetramer that dissociates during interaction with TBP and then, after complexing with TBP, reassociates at a slow rate, to reconstitute the tetramer. Interacts with NFIL3. Component of the ADA2A-containing complex (ATAC), composed of KAT14, KAT2A, TADA2L, TADA3L, ZZ3, MBIP, WDR5, YEATS2, CCDC101 and DR1 (By similarity).</text>
</comment>
<comment type="subcellular location">
    <subcellularLocation>
        <location evidence="1">Nucleus</location>
    </subcellularLocation>
</comment>
<comment type="PTM">
    <text evidence="1">Phosphorylation regulates its interaction with TBP. Not phosphorylated when bound to DRAP1 (By similarity).</text>
</comment>
<comment type="similarity">
    <text evidence="5">Belongs to the NC2 beta/DR1 family.</text>
</comment>
<sequence length="176" mass="19431">MASSSGNDDDLTIPRAAINKMIKETLPNVRVANDARELVVNCCTEFIHLISSEANEICNKSEKKTISPEHVIQALESLGFGSYISEVKEVLQECKTVALKRRKASSRLENLGIPEEELLRQQQELFAKARQQQAELAQQEWLQMQQAAQQAQLAAASASASTQAGSSQDEEDDDDI</sequence>
<name>NC2B_MOUSE</name>
<evidence type="ECO:0000250" key="1"/>
<evidence type="ECO:0000250" key="2">
    <source>
        <dbReference type="UniProtKB" id="Q01658"/>
    </source>
</evidence>
<evidence type="ECO:0000255" key="3"/>
<evidence type="ECO:0000256" key="4">
    <source>
        <dbReference type="SAM" id="MobiDB-lite"/>
    </source>
</evidence>
<evidence type="ECO:0000305" key="5"/>
<evidence type="ECO:0007744" key="6">
    <source>
    </source>
</evidence>
<protein>
    <recommendedName>
        <fullName>Protein Dr1</fullName>
    </recommendedName>
    <alternativeName>
        <fullName>Down-regulator of transcription 1</fullName>
    </alternativeName>
    <alternativeName>
        <fullName>Negative cofactor 2-beta</fullName>
        <shortName>NC2-beta</shortName>
    </alternativeName>
    <alternativeName>
        <fullName>TATA-binding protein-associated phosphoprotein</fullName>
    </alternativeName>
</protein>
<proteinExistence type="evidence at protein level"/>
<feature type="initiator methionine" description="Removed" evidence="2">
    <location>
        <position position="1"/>
    </location>
</feature>
<feature type="chain" id="PRO_0000072441" description="Protein Dr1">
    <location>
        <begin position="2"/>
        <end position="176"/>
    </location>
</feature>
<feature type="domain" description="Histone-fold" evidence="3">
    <location>
        <begin position="12"/>
        <end position="75"/>
    </location>
</feature>
<feature type="region of interest" description="Disordered" evidence="4">
    <location>
        <begin position="152"/>
        <end position="176"/>
    </location>
</feature>
<feature type="short sequence motif" description="Nuclear localization signal" evidence="3">
    <location>
        <begin position="100"/>
        <end position="103"/>
    </location>
</feature>
<feature type="compositionally biased region" description="Low complexity" evidence="4">
    <location>
        <begin position="152"/>
        <end position="167"/>
    </location>
</feature>
<feature type="modified residue" description="N-acetylalanine" evidence="2">
    <location>
        <position position="2"/>
    </location>
</feature>
<feature type="modified residue" description="Phosphoserine" evidence="6">
    <location>
        <position position="105"/>
    </location>
</feature>
<feature type="modified residue" description="Phosphoserine" evidence="2">
    <location>
        <position position="106"/>
    </location>
</feature>
<feature type="modified residue" description="Phosphoserine" evidence="2">
    <location>
        <position position="166"/>
    </location>
</feature>
<feature type="modified residue" description="Phosphoserine" evidence="2">
    <location>
        <position position="167"/>
    </location>
</feature>
<reference key="1">
    <citation type="journal article" date="2005" name="Science">
        <title>The transcriptional landscape of the mammalian genome.</title>
        <authorList>
            <person name="Carninci P."/>
            <person name="Kasukawa T."/>
            <person name="Katayama S."/>
            <person name="Gough J."/>
            <person name="Frith M.C."/>
            <person name="Maeda N."/>
            <person name="Oyama R."/>
            <person name="Ravasi T."/>
            <person name="Lenhard B."/>
            <person name="Wells C."/>
            <person name="Kodzius R."/>
            <person name="Shimokawa K."/>
            <person name="Bajic V.B."/>
            <person name="Brenner S.E."/>
            <person name="Batalov S."/>
            <person name="Forrest A.R."/>
            <person name="Zavolan M."/>
            <person name="Davis M.J."/>
            <person name="Wilming L.G."/>
            <person name="Aidinis V."/>
            <person name="Allen J.E."/>
            <person name="Ambesi-Impiombato A."/>
            <person name="Apweiler R."/>
            <person name="Aturaliya R.N."/>
            <person name="Bailey T.L."/>
            <person name="Bansal M."/>
            <person name="Baxter L."/>
            <person name="Beisel K.W."/>
            <person name="Bersano T."/>
            <person name="Bono H."/>
            <person name="Chalk A.M."/>
            <person name="Chiu K.P."/>
            <person name="Choudhary V."/>
            <person name="Christoffels A."/>
            <person name="Clutterbuck D.R."/>
            <person name="Crowe M.L."/>
            <person name="Dalla E."/>
            <person name="Dalrymple B.P."/>
            <person name="de Bono B."/>
            <person name="Della Gatta G."/>
            <person name="di Bernardo D."/>
            <person name="Down T."/>
            <person name="Engstrom P."/>
            <person name="Fagiolini M."/>
            <person name="Faulkner G."/>
            <person name="Fletcher C.F."/>
            <person name="Fukushima T."/>
            <person name="Furuno M."/>
            <person name="Futaki S."/>
            <person name="Gariboldi M."/>
            <person name="Georgii-Hemming P."/>
            <person name="Gingeras T.R."/>
            <person name="Gojobori T."/>
            <person name="Green R.E."/>
            <person name="Gustincich S."/>
            <person name="Harbers M."/>
            <person name="Hayashi Y."/>
            <person name="Hensch T.K."/>
            <person name="Hirokawa N."/>
            <person name="Hill D."/>
            <person name="Huminiecki L."/>
            <person name="Iacono M."/>
            <person name="Ikeo K."/>
            <person name="Iwama A."/>
            <person name="Ishikawa T."/>
            <person name="Jakt M."/>
            <person name="Kanapin A."/>
            <person name="Katoh M."/>
            <person name="Kawasawa Y."/>
            <person name="Kelso J."/>
            <person name="Kitamura H."/>
            <person name="Kitano H."/>
            <person name="Kollias G."/>
            <person name="Krishnan S.P."/>
            <person name="Kruger A."/>
            <person name="Kummerfeld S.K."/>
            <person name="Kurochkin I.V."/>
            <person name="Lareau L.F."/>
            <person name="Lazarevic D."/>
            <person name="Lipovich L."/>
            <person name="Liu J."/>
            <person name="Liuni S."/>
            <person name="McWilliam S."/>
            <person name="Madan Babu M."/>
            <person name="Madera M."/>
            <person name="Marchionni L."/>
            <person name="Matsuda H."/>
            <person name="Matsuzawa S."/>
            <person name="Miki H."/>
            <person name="Mignone F."/>
            <person name="Miyake S."/>
            <person name="Morris K."/>
            <person name="Mottagui-Tabar S."/>
            <person name="Mulder N."/>
            <person name="Nakano N."/>
            <person name="Nakauchi H."/>
            <person name="Ng P."/>
            <person name="Nilsson R."/>
            <person name="Nishiguchi S."/>
            <person name="Nishikawa S."/>
            <person name="Nori F."/>
            <person name="Ohara O."/>
            <person name="Okazaki Y."/>
            <person name="Orlando V."/>
            <person name="Pang K.C."/>
            <person name="Pavan W.J."/>
            <person name="Pavesi G."/>
            <person name="Pesole G."/>
            <person name="Petrovsky N."/>
            <person name="Piazza S."/>
            <person name="Reed J."/>
            <person name="Reid J.F."/>
            <person name="Ring B.Z."/>
            <person name="Ringwald M."/>
            <person name="Rost B."/>
            <person name="Ruan Y."/>
            <person name="Salzberg S.L."/>
            <person name="Sandelin A."/>
            <person name="Schneider C."/>
            <person name="Schoenbach C."/>
            <person name="Sekiguchi K."/>
            <person name="Semple C.A."/>
            <person name="Seno S."/>
            <person name="Sessa L."/>
            <person name="Sheng Y."/>
            <person name="Shibata Y."/>
            <person name="Shimada H."/>
            <person name="Shimada K."/>
            <person name="Silva D."/>
            <person name="Sinclair B."/>
            <person name="Sperling S."/>
            <person name="Stupka E."/>
            <person name="Sugiura K."/>
            <person name="Sultana R."/>
            <person name="Takenaka Y."/>
            <person name="Taki K."/>
            <person name="Tammoja K."/>
            <person name="Tan S.L."/>
            <person name="Tang S."/>
            <person name="Taylor M.S."/>
            <person name="Tegner J."/>
            <person name="Teichmann S.A."/>
            <person name="Ueda H.R."/>
            <person name="van Nimwegen E."/>
            <person name="Verardo R."/>
            <person name="Wei C.L."/>
            <person name="Yagi K."/>
            <person name="Yamanishi H."/>
            <person name="Zabarovsky E."/>
            <person name="Zhu S."/>
            <person name="Zimmer A."/>
            <person name="Hide W."/>
            <person name="Bult C."/>
            <person name="Grimmond S.M."/>
            <person name="Teasdale R.D."/>
            <person name="Liu E.T."/>
            <person name="Brusic V."/>
            <person name="Quackenbush J."/>
            <person name="Wahlestedt C."/>
            <person name="Mattick J.S."/>
            <person name="Hume D.A."/>
            <person name="Kai C."/>
            <person name="Sasaki D."/>
            <person name="Tomaru Y."/>
            <person name="Fukuda S."/>
            <person name="Kanamori-Katayama M."/>
            <person name="Suzuki M."/>
            <person name="Aoki J."/>
            <person name="Arakawa T."/>
            <person name="Iida J."/>
            <person name="Imamura K."/>
            <person name="Itoh M."/>
            <person name="Kato T."/>
            <person name="Kawaji H."/>
            <person name="Kawagashira N."/>
            <person name="Kawashima T."/>
            <person name="Kojima M."/>
            <person name="Kondo S."/>
            <person name="Konno H."/>
            <person name="Nakano K."/>
            <person name="Ninomiya N."/>
            <person name="Nishio T."/>
            <person name="Okada M."/>
            <person name="Plessy C."/>
            <person name="Shibata K."/>
            <person name="Shiraki T."/>
            <person name="Suzuki S."/>
            <person name="Tagami M."/>
            <person name="Waki K."/>
            <person name="Watahiki A."/>
            <person name="Okamura-Oho Y."/>
            <person name="Suzuki H."/>
            <person name="Kawai J."/>
            <person name="Hayashizaki Y."/>
        </authorList>
    </citation>
    <scope>NUCLEOTIDE SEQUENCE [LARGE SCALE MRNA]</scope>
    <source>
        <strain>C57BL/6J</strain>
        <tissue>Egg</tissue>
        <tissue>Kidney</tissue>
        <tissue>Liver</tissue>
        <tissue>Thymus</tissue>
        <tissue>Urinary bladder</tissue>
    </source>
</reference>
<reference key="2">
    <citation type="journal article" date="2004" name="Genome Res.">
        <title>The status, quality, and expansion of the NIH full-length cDNA project: the Mammalian Gene Collection (MGC).</title>
        <authorList>
            <consortium name="The MGC Project Team"/>
        </authorList>
    </citation>
    <scope>NUCLEOTIDE SEQUENCE [LARGE SCALE MRNA]</scope>
    <source>
        <strain>FVB/N</strain>
        <tissue>Kidney</tissue>
    </source>
</reference>
<reference key="3">
    <citation type="journal article" date="2010" name="Cell">
        <title>A tissue-specific atlas of mouse protein phosphorylation and expression.</title>
        <authorList>
            <person name="Huttlin E.L."/>
            <person name="Jedrychowski M.P."/>
            <person name="Elias J.E."/>
            <person name="Goswami T."/>
            <person name="Rad R."/>
            <person name="Beausoleil S.A."/>
            <person name="Villen J."/>
            <person name="Haas W."/>
            <person name="Sowa M.E."/>
            <person name="Gygi S.P."/>
        </authorList>
    </citation>
    <scope>PHOSPHORYLATION [LARGE SCALE ANALYSIS] AT SER-105</scope>
    <scope>IDENTIFICATION BY MASS SPECTROMETRY [LARGE SCALE ANALYSIS]</scope>
    <source>
        <tissue>Brain</tissue>
        <tissue>Liver</tissue>
        <tissue>Lung</tissue>
        <tissue>Pancreas</tissue>
        <tissue>Spleen</tissue>
        <tissue>Testis</tissue>
    </source>
</reference>
<keyword id="KW-0007">Acetylation</keyword>
<keyword id="KW-0238">DNA-binding</keyword>
<keyword id="KW-0539">Nucleus</keyword>
<keyword id="KW-0597">Phosphoprotein</keyword>
<keyword id="KW-1185">Reference proteome</keyword>
<keyword id="KW-0678">Repressor</keyword>
<keyword id="KW-0804">Transcription</keyword>
<keyword id="KW-0805">Transcription regulation</keyword>